<proteinExistence type="predicted"/>
<feature type="chain" id="PRO_0000127990" description="Uncharacterized protein AF_1335">
    <location>
        <begin position="1"/>
        <end position="156"/>
    </location>
</feature>
<feature type="transmembrane region" description="Helical" evidence="1">
    <location>
        <begin position="42"/>
        <end position="59"/>
    </location>
</feature>
<feature type="transmembrane region" description="Helical" evidence="1">
    <location>
        <begin position="79"/>
        <end position="98"/>
    </location>
</feature>
<feature type="transmembrane region" description="Helical" evidence="1">
    <location>
        <begin position="105"/>
        <end position="127"/>
    </location>
</feature>
<gene>
    <name type="ordered locus">AF_1335</name>
</gene>
<dbReference type="EMBL" id="AE000782">
    <property type="protein sequence ID" value="AAB89913.1"/>
    <property type="molecule type" value="Genomic_DNA"/>
</dbReference>
<dbReference type="PIR" id="F69416">
    <property type="entry name" value="F69416"/>
</dbReference>
<dbReference type="STRING" id="224325.AF_1335"/>
<dbReference type="PaxDb" id="224325-AF_1335"/>
<dbReference type="EnsemblBacteria" id="AAB89913">
    <property type="protein sequence ID" value="AAB89913"/>
    <property type="gene ID" value="AF_1335"/>
</dbReference>
<dbReference type="KEGG" id="afu:AF_1335"/>
<dbReference type="eggNOG" id="arCOG14514">
    <property type="taxonomic scope" value="Archaea"/>
</dbReference>
<dbReference type="HOGENOM" id="CLU_142035_0_0_2"/>
<dbReference type="Proteomes" id="UP000002199">
    <property type="component" value="Chromosome"/>
</dbReference>
<dbReference type="GO" id="GO:0005886">
    <property type="term" value="C:plasma membrane"/>
    <property type="evidence" value="ECO:0007669"/>
    <property type="project" value="UniProtKB-SubCell"/>
</dbReference>
<dbReference type="InterPro" id="IPR043717">
    <property type="entry name" value="DUF5658"/>
</dbReference>
<dbReference type="Pfam" id="PF18902">
    <property type="entry name" value="DUF5658"/>
    <property type="match status" value="1"/>
</dbReference>
<comment type="subcellular location">
    <subcellularLocation>
        <location evidence="2">Cell membrane</location>
        <topology evidence="2">Multi-pass membrane protein</topology>
    </subcellularLocation>
</comment>
<accession>O28934</accession>
<evidence type="ECO:0000255" key="1"/>
<evidence type="ECO:0000305" key="2"/>
<keyword id="KW-1003">Cell membrane</keyword>
<keyword id="KW-0472">Membrane</keyword>
<keyword id="KW-1185">Reference proteome</keyword>
<keyword id="KW-0812">Transmembrane</keyword>
<keyword id="KW-1133">Transmembrane helix</keyword>
<protein>
    <recommendedName>
        <fullName>Uncharacterized protein AF_1335</fullName>
    </recommendedName>
</protein>
<organism>
    <name type="scientific">Archaeoglobus fulgidus (strain ATCC 49558 / DSM 4304 / JCM 9628 / NBRC 100126 / VC-16)</name>
    <dbReference type="NCBI Taxonomy" id="224325"/>
    <lineage>
        <taxon>Archaea</taxon>
        <taxon>Methanobacteriati</taxon>
        <taxon>Methanobacteriota</taxon>
        <taxon>Archaeoglobi</taxon>
        <taxon>Archaeoglobales</taxon>
        <taxon>Archaeoglobaceae</taxon>
        <taxon>Archaeoglobus</taxon>
    </lineage>
</organism>
<sequence length="156" mass="17020">MVSRTTTSIPINFRGVGVYKTFANKNLLYCNCNIVSMEKTDLLMMTFAIVNLADYMTTVKGIEMGFHELNEFVSSLNPASFLLLKIAIVATAFALLLYTRRLSFSLGRGIYIGLVAGLAISTAVLGICSVHNLLLLTGFPEVEFLVKVMTGVLALI</sequence>
<reference key="1">
    <citation type="journal article" date="1997" name="Nature">
        <title>The complete genome sequence of the hyperthermophilic, sulphate-reducing archaeon Archaeoglobus fulgidus.</title>
        <authorList>
            <person name="Klenk H.-P."/>
            <person name="Clayton R.A."/>
            <person name="Tomb J.-F."/>
            <person name="White O."/>
            <person name="Nelson K.E."/>
            <person name="Ketchum K.A."/>
            <person name="Dodson R.J."/>
            <person name="Gwinn M.L."/>
            <person name="Hickey E.K."/>
            <person name="Peterson J.D."/>
            <person name="Richardson D.L."/>
            <person name="Kerlavage A.R."/>
            <person name="Graham D.E."/>
            <person name="Kyrpides N.C."/>
            <person name="Fleischmann R.D."/>
            <person name="Quackenbush J."/>
            <person name="Lee N.H."/>
            <person name="Sutton G.G."/>
            <person name="Gill S.R."/>
            <person name="Kirkness E.F."/>
            <person name="Dougherty B.A."/>
            <person name="McKenney K."/>
            <person name="Adams M.D."/>
            <person name="Loftus B.J."/>
            <person name="Peterson S.N."/>
            <person name="Reich C.I."/>
            <person name="McNeil L.K."/>
            <person name="Badger J.H."/>
            <person name="Glodek A."/>
            <person name="Zhou L."/>
            <person name="Overbeek R."/>
            <person name="Gocayne J.D."/>
            <person name="Weidman J.F."/>
            <person name="McDonald L.A."/>
            <person name="Utterback T.R."/>
            <person name="Cotton M.D."/>
            <person name="Spriggs T."/>
            <person name="Artiach P."/>
            <person name="Kaine B.P."/>
            <person name="Sykes S.M."/>
            <person name="Sadow P.W."/>
            <person name="D'Andrea K.P."/>
            <person name="Bowman C."/>
            <person name="Fujii C."/>
            <person name="Garland S.A."/>
            <person name="Mason T.M."/>
            <person name="Olsen G.J."/>
            <person name="Fraser C.M."/>
            <person name="Smith H.O."/>
            <person name="Woese C.R."/>
            <person name="Venter J.C."/>
        </authorList>
    </citation>
    <scope>NUCLEOTIDE SEQUENCE [LARGE SCALE GENOMIC DNA]</scope>
    <source>
        <strain>ATCC 49558 / DSM 4304 / JCM 9628 / NBRC 100126 / VC-16</strain>
    </source>
</reference>
<name>Y1335_ARCFU</name>